<comment type="catalytic activity">
    <reaction>
        <text>S-adenosyl-L-methionine + H(+) = S-adenosyl 3-(methylsulfanyl)propylamine + CO2</text>
        <dbReference type="Rhea" id="RHEA:15981"/>
        <dbReference type="ChEBI" id="CHEBI:15378"/>
        <dbReference type="ChEBI" id="CHEBI:16526"/>
        <dbReference type="ChEBI" id="CHEBI:57443"/>
        <dbReference type="ChEBI" id="CHEBI:59789"/>
        <dbReference type="EC" id="4.1.1.50"/>
    </reaction>
</comment>
<comment type="cofactor">
    <cofactor>
        <name>pyruvate</name>
        <dbReference type="ChEBI" id="CHEBI:15361"/>
    </cofactor>
    <text>Binds 1 pyruvoyl group covalently per subunit.</text>
</comment>
<comment type="pathway">
    <text>Amine and polyamine biosynthesis; S-adenosylmethioninamine biosynthesis; S-adenosylmethioninamine from S-adenosyl-L-methionine: step 1/1.</text>
</comment>
<comment type="tissue specificity">
    <text evidence="3">Stolon, also expressed in leaves, stems and roots.</text>
</comment>
<comment type="developmental stage">
    <text evidence="3">Transcribed in the stolon tip during the early stages of tuberization. Maximum expression was in non-swelling stolon tips from stage b, and level declined as the tuber increased in size.</text>
</comment>
<comment type="PTM">
    <text evidence="1">Is synthesized initially as an inactive proenzyme. Formation of the active enzyme involves a self-maturation process in which the active site pyruvoyl group is generated from an internal serine residue via an autocatalytic post-translational modification. Two non-identical subunits are generated from the proenzyme in this reaction, and the pyruvate is formed at the N-terminus of the alpha chain, which is derived from the carboxyl end of the proenzyme. The post-translation cleavage follows an unusual pathway, termed non-hydrolytic serinolysis, in which the side chain hydroxyl group of the serine supplies its oxygen atom to form the C-terminus of the beta chain, while the remainder of the serine residue undergoes an oxidative deamination to produce ammonia and the pyruvoyl group blocking the N-terminus of the alpha chain (By similarity).</text>
</comment>
<comment type="similarity">
    <text evidence="4">Belongs to the eukaryotic AdoMetDC family.</text>
</comment>
<feature type="chain" id="PRO_0000030023" description="S-adenosylmethionine decarboxylase beta chain">
    <location>
        <begin position="1"/>
        <end position="72"/>
    </location>
</feature>
<feature type="chain" id="PRO_0000030024" description="S-adenosylmethionine decarboxylase alpha chain">
    <location>
        <begin position="73"/>
        <end position="360"/>
    </location>
</feature>
<feature type="active site">
    <location>
        <position position="13"/>
    </location>
</feature>
<feature type="active site">
    <location>
        <position position="16"/>
    </location>
</feature>
<feature type="active site" description="Schiff-base intermediate with substrate; via pyruvic acid" evidence="1">
    <location>
        <position position="73"/>
    </location>
</feature>
<feature type="active site" description="Proton donor; for catalytic activity" evidence="1">
    <location>
        <position position="87"/>
    </location>
</feature>
<feature type="active site" description="Proton acceptor; for processing activity" evidence="1">
    <location>
        <position position="236"/>
    </location>
</feature>
<feature type="active site" description="Proton acceptor; for processing activity" evidence="1">
    <location>
        <position position="249"/>
    </location>
</feature>
<feature type="site" description="Cleavage (non-hydrolytic); by autolysis">
    <location>
        <begin position="72"/>
        <end position="73"/>
    </location>
</feature>
<feature type="modified residue" description="Pyruvic acid (Ser); by autocatalysis" evidence="2">
    <location>
        <position position="73"/>
    </location>
</feature>
<feature type="sequence conflict" description="In Ref. 2; AAB32507." evidence="4" ref="2">
    <original>S</original>
    <variation>P</variation>
    <location>
        <position position="174"/>
    </location>
</feature>
<feature type="sequence conflict" description="In Ref. 2; AAB32507." evidence="4" ref="2">
    <original>T</original>
    <variation>S</variation>
    <location>
        <position position="257"/>
    </location>
</feature>
<feature type="sequence conflict" description="In Ref. 2; AAB32507." evidence="4" ref="2">
    <original>V</original>
    <variation>I</variation>
    <location>
        <position position="291"/>
    </location>
</feature>
<feature type="sequence conflict" description="In Ref. 2; AAB32507." evidence="4" ref="2">
    <original>I</original>
    <variation>T</variation>
    <location>
        <position position="305"/>
    </location>
</feature>
<feature type="strand" evidence="5">
    <location>
        <begin position="16"/>
        <end position="23"/>
    </location>
</feature>
<feature type="helix" evidence="5">
    <location>
        <begin position="37"/>
        <end position="39"/>
    </location>
</feature>
<feature type="helix" evidence="5">
    <location>
        <begin position="42"/>
        <end position="52"/>
    </location>
</feature>
<feature type="strand" evidence="5">
    <location>
        <begin position="55"/>
        <end position="61"/>
    </location>
</feature>
<feature type="strand" evidence="5">
    <location>
        <begin position="66"/>
        <end position="71"/>
    </location>
</feature>
<feature type="strand" evidence="5">
    <location>
        <begin position="75"/>
        <end position="78"/>
    </location>
</feature>
<feature type="strand" evidence="5">
    <location>
        <begin position="81"/>
        <end position="87"/>
    </location>
</feature>
<feature type="helix" evidence="5">
    <location>
        <begin position="92"/>
        <end position="95"/>
    </location>
</feature>
<feature type="helix" evidence="5">
    <location>
        <begin position="96"/>
        <end position="105"/>
    </location>
</feature>
<feature type="strand" evidence="5">
    <location>
        <begin position="110"/>
        <end position="117"/>
    </location>
</feature>
<feature type="helix" evidence="5">
    <location>
        <begin position="133"/>
        <end position="144"/>
    </location>
</feature>
<feature type="strand" evidence="5">
    <location>
        <begin position="151"/>
        <end position="159"/>
    </location>
</feature>
<feature type="strand" evidence="5">
    <location>
        <begin position="165"/>
        <end position="172"/>
    </location>
</feature>
<feature type="strand" evidence="5">
    <location>
        <begin position="183"/>
        <end position="191"/>
    </location>
</feature>
<feature type="helix" evidence="5">
    <location>
        <begin position="193"/>
        <end position="197"/>
    </location>
</feature>
<feature type="helix" evidence="5">
    <location>
        <begin position="207"/>
        <end position="213"/>
    </location>
</feature>
<feature type="helix" evidence="5">
    <location>
        <begin position="216"/>
        <end position="218"/>
    </location>
</feature>
<feature type="strand" evidence="5">
    <location>
        <begin position="223"/>
        <end position="229"/>
    </location>
</feature>
<feature type="strand" evidence="5">
    <location>
        <begin position="231"/>
        <end position="233"/>
    </location>
</feature>
<feature type="strand" evidence="5">
    <location>
        <begin position="235"/>
        <end position="241"/>
    </location>
</feature>
<feature type="strand" evidence="5">
    <location>
        <begin position="244"/>
        <end position="251"/>
    </location>
</feature>
<feature type="strand" evidence="5">
    <location>
        <begin position="258"/>
        <end position="265"/>
    </location>
</feature>
<feature type="turn" evidence="5">
    <location>
        <begin position="268"/>
        <end position="270"/>
    </location>
</feature>
<feature type="helix" evidence="5">
    <location>
        <begin position="273"/>
        <end position="284"/>
    </location>
</feature>
<feature type="strand" evidence="5">
    <location>
        <begin position="286"/>
        <end position="297"/>
    </location>
</feature>
<feature type="helix" evidence="5">
    <location>
        <begin position="299"/>
        <end position="306"/>
    </location>
</feature>
<feature type="strand" evidence="5">
    <location>
        <begin position="313"/>
        <end position="322"/>
    </location>
</feature>
<feature type="helix" evidence="5">
    <location>
        <begin position="324"/>
        <end position="326"/>
    </location>
</feature>
<feature type="strand" evidence="5">
    <location>
        <begin position="328"/>
        <end position="336"/>
    </location>
</feature>
<evidence type="ECO:0000250" key="1"/>
<evidence type="ECO:0000269" key="2">
    <source>
    </source>
</evidence>
<evidence type="ECO:0000269" key="3">
    <source>
    </source>
</evidence>
<evidence type="ECO:0000305" key="4"/>
<evidence type="ECO:0007829" key="5">
    <source>
        <dbReference type="PDB" id="1MHM"/>
    </source>
</evidence>
<gene>
    <name type="primary">SAMDC</name>
    <name type="synonym">TUB13</name>
</gene>
<keyword id="KW-0002">3D-structure</keyword>
<keyword id="KW-0068">Autocatalytic cleavage</keyword>
<keyword id="KW-0210">Decarboxylase</keyword>
<keyword id="KW-0456">Lyase</keyword>
<keyword id="KW-0620">Polyamine biosynthesis</keyword>
<keyword id="KW-0670">Pyruvate</keyword>
<keyword id="KW-1185">Reference proteome</keyword>
<keyword id="KW-0949">S-adenosyl-L-methionine</keyword>
<keyword id="KW-0704">Schiff base</keyword>
<keyword id="KW-0745">Spermidine biosynthesis</keyword>
<keyword id="KW-0865">Zymogen</keyword>
<name>DCAM_SOLTU</name>
<proteinExistence type="evidence at protein level"/>
<sequence>MEMDLPVSAIGFEGFEKRLEISFVEPGLFADPNGKGLRSLSKAQLDEILGPAECTIVDNLSNDYVDSYVLSESSLFVYSYKIIIKTCGTTKLLLAIPPILRLAETLSLKVQDVRYTRGSFIFPGAQSFPHRHFSEEVAVLDGYFGKLAAGSKAVIMGSPDKTQKWHVYSASAGSVQSNDPVYTLEMCMTGLDREKASVFYKTEESSAAHMTVRSGIRKILPKSEICDFEFEPCGYSMNSIEGAAVSTIHITPEDGFTYASFESVGYNPKTMELGPLVERVLACFEPAEFSVALHADVATKLLERICSVDVKGYSLAEWSPEEFGEGGSIVYQKFTRTPYCESPKSVLKGCWKEEEKEGKE</sequence>
<accession>Q04694</accession>
<reference key="1">
    <citation type="journal article" date="1992" name="Plant Mol. Biol.">
        <title>Expression and sequence analysis of cDNAs induced during the early stages of tuberisation in different organs of the potato plant (Solanum tuberosum L.).</title>
        <authorList>
            <person name="Taylor M.A."/>
            <person name="Mad Arif S.A."/>
            <person name="Kumar A."/>
            <person name="Davies H.V."/>
            <person name="Scobie L.A."/>
            <person name="Pearce S.R."/>
            <person name="Flavell A.J."/>
        </authorList>
    </citation>
    <scope>NUCLEOTIDE SEQUENCE [MRNA]</scope>
    <scope>TISSUE SPECIFICITY</scope>
    <scope>DEVELOPMENTAL STAGE</scope>
    <source>
        <strain>cv. Record</strain>
        <tissue>Stolon tip</tissue>
    </source>
</reference>
<reference key="2">
    <citation type="journal article" date="1994" name="Plant Mol. Biol.">
        <title>Characterisation of the S-adenosylmethionine decarboxylase (SAMDC) gene of potato.</title>
        <authorList>
            <person name="Mad Arif S.A."/>
            <person name="Taylor M.A."/>
            <person name="George L.A."/>
            <person name="Butler A.R."/>
            <person name="Burch L.R."/>
            <person name="Davies H.V."/>
            <person name="Stark M.J."/>
            <person name="Kumar A."/>
        </authorList>
    </citation>
    <scope>NUCLEOTIDE SEQUENCE [GENOMIC DNA]</scope>
    <source>
        <strain>cv. Desiree</strain>
    </source>
</reference>
<reference key="3">
    <citation type="journal article" date="2002" name="Biochemistry">
        <title>Monomeric S-adenosylmethionine decarboxylase from plants provides an alternative to putrescine stimulation.</title>
        <authorList>
            <person name="Bennett E.M."/>
            <person name="Ekstrom J.L."/>
            <person name="Pegg A.E."/>
            <person name="Ealick S.E."/>
        </authorList>
    </citation>
    <scope>X-RAY CRYSTALLOGRAPHY (2.3 ANGSTROMS)</scope>
    <scope>PYRUVATE FORMATION AT SER-73</scope>
</reference>
<dbReference type="EC" id="4.1.1.50"/>
<dbReference type="EMBL" id="Z11680">
    <property type="protein sequence ID" value="CAA77742.1"/>
    <property type="molecule type" value="mRNA"/>
</dbReference>
<dbReference type="EMBL" id="S74514">
    <property type="protein sequence ID" value="AAB32507.1"/>
    <property type="molecule type" value="Genomic_DNA"/>
</dbReference>
<dbReference type="PIR" id="S52662">
    <property type="entry name" value="S52662"/>
</dbReference>
<dbReference type="RefSeq" id="NP_001306788.1">
    <property type="nucleotide sequence ID" value="NM_001319859.1"/>
</dbReference>
<dbReference type="PDB" id="1MHM">
    <property type="method" value="X-ray"/>
    <property type="resolution" value="2.30 A"/>
    <property type="chains" value="A=73-360, B=1-72"/>
</dbReference>
<dbReference type="PDBsum" id="1MHM"/>
<dbReference type="SMR" id="Q04694"/>
<dbReference type="FunCoup" id="Q04694">
    <property type="interactions" value="1748"/>
</dbReference>
<dbReference type="STRING" id="4113.Q04694"/>
<dbReference type="PaxDb" id="4113-PGSC0003DMT400019451"/>
<dbReference type="GeneID" id="102601725"/>
<dbReference type="KEGG" id="sot:102601725"/>
<dbReference type="eggNOG" id="KOG0788">
    <property type="taxonomic scope" value="Eukaryota"/>
</dbReference>
<dbReference type="InParanoid" id="Q04694"/>
<dbReference type="OrthoDB" id="1068353at2759"/>
<dbReference type="BRENDA" id="4.1.1.50">
    <property type="organism ID" value="5757"/>
</dbReference>
<dbReference type="UniPathway" id="UPA00331">
    <property type="reaction ID" value="UER00451"/>
</dbReference>
<dbReference type="EvolutionaryTrace" id="Q04694"/>
<dbReference type="Proteomes" id="UP000011115">
    <property type="component" value="Unassembled WGS sequence"/>
</dbReference>
<dbReference type="ExpressionAtlas" id="Q04694">
    <property type="expression patterns" value="baseline"/>
</dbReference>
<dbReference type="GO" id="GO:0005829">
    <property type="term" value="C:cytosol"/>
    <property type="evidence" value="ECO:0000318"/>
    <property type="project" value="GO_Central"/>
</dbReference>
<dbReference type="GO" id="GO:0004014">
    <property type="term" value="F:adenosylmethionine decarboxylase activity"/>
    <property type="evidence" value="ECO:0000318"/>
    <property type="project" value="GO_Central"/>
</dbReference>
<dbReference type="GO" id="GO:0008295">
    <property type="term" value="P:spermidine biosynthetic process"/>
    <property type="evidence" value="ECO:0000318"/>
    <property type="project" value="GO_Central"/>
</dbReference>
<dbReference type="GO" id="GO:0006597">
    <property type="term" value="P:spermine biosynthetic process"/>
    <property type="evidence" value="ECO:0000318"/>
    <property type="project" value="GO_Central"/>
</dbReference>
<dbReference type="FunFam" id="3.30.360.50:FF:000001">
    <property type="entry name" value="S-adenosylmethionine decarboxylase proenzyme"/>
    <property type="match status" value="1"/>
</dbReference>
<dbReference type="FunFam" id="3.60.90.10:FF:000002">
    <property type="entry name" value="S-adenosylmethionine decarboxylase proenzyme"/>
    <property type="match status" value="1"/>
</dbReference>
<dbReference type="Gene3D" id="3.30.360.50">
    <property type="entry name" value="S-adenosylmethionine decarboxylase"/>
    <property type="match status" value="1"/>
</dbReference>
<dbReference type="Gene3D" id="3.60.90.10">
    <property type="entry name" value="S-adenosylmethionine decarboxylase"/>
    <property type="match status" value="1"/>
</dbReference>
<dbReference type="InterPro" id="IPR048283">
    <property type="entry name" value="AdoMetDC-like"/>
</dbReference>
<dbReference type="InterPro" id="IPR001985">
    <property type="entry name" value="S-AdoMet_decarboxylase_euk"/>
</dbReference>
<dbReference type="InterPro" id="IPR016067">
    <property type="entry name" value="S-AdoMet_deCO2ase_core"/>
</dbReference>
<dbReference type="InterPro" id="IPR018166">
    <property type="entry name" value="S-AdoMet_deCO2ase_CS"/>
</dbReference>
<dbReference type="NCBIfam" id="TIGR00535">
    <property type="entry name" value="SAM_DCase"/>
    <property type="match status" value="1"/>
</dbReference>
<dbReference type="PANTHER" id="PTHR11570">
    <property type="entry name" value="S-ADENOSYLMETHIONINE DECARBOXYLASE"/>
    <property type="match status" value="1"/>
</dbReference>
<dbReference type="PANTHER" id="PTHR11570:SF15">
    <property type="entry name" value="S-ADENOSYLMETHIONINE DECARBOXYLASE PROENZYME 3"/>
    <property type="match status" value="1"/>
</dbReference>
<dbReference type="Pfam" id="PF01536">
    <property type="entry name" value="SAM_decarbox"/>
    <property type="match status" value="1"/>
</dbReference>
<dbReference type="PIRSF" id="PIRSF001355">
    <property type="entry name" value="S-AdenosylMet_decarboxylase"/>
    <property type="match status" value="1"/>
</dbReference>
<dbReference type="SUPFAM" id="SSF56276">
    <property type="entry name" value="S-adenosylmethionine decarboxylase"/>
    <property type="match status" value="1"/>
</dbReference>
<dbReference type="PROSITE" id="PS01336">
    <property type="entry name" value="ADOMETDC"/>
    <property type="match status" value="1"/>
</dbReference>
<organism>
    <name type="scientific">Solanum tuberosum</name>
    <name type="common">Potato</name>
    <dbReference type="NCBI Taxonomy" id="4113"/>
    <lineage>
        <taxon>Eukaryota</taxon>
        <taxon>Viridiplantae</taxon>
        <taxon>Streptophyta</taxon>
        <taxon>Embryophyta</taxon>
        <taxon>Tracheophyta</taxon>
        <taxon>Spermatophyta</taxon>
        <taxon>Magnoliopsida</taxon>
        <taxon>eudicotyledons</taxon>
        <taxon>Gunneridae</taxon>
        <taxon>Pentapetalae</taxon>
        <taxon>asterids</taxon>
        <taxon>lamiids</taxon>
        <taxon>Solanales</taxon>
        <taxon>Solanaceae</taxon>
        <taxon>Solanoideae</taxon>
        <taxon>Solaneae</taxon>
        <taxon>Solanum</taxon>
    </lineage>
</organism>
<protein>
    <recommendedName>
        <fullName>S-adenosylmethionine decarboxylase proenzyme</fullName>
        <shortName>AdoMetDC</shortName>
        <shortName>SAMDC</shortName>
        <ecNumber>4.1.1.50</ecNumber>
    </recommendedName>
    <alternativeName>
        <fullName>Induced stolen tip protein TUB13</fullName>
    </alternativeName>
    <component>
        <recommendedName>
            <fullName>S-adenosylmethionine decarboxylase alpha chain</fullName>
        </recommendedName>
    </component>
    <component>
        <recommendedName>
            <fullName>S-adenosylmethionine decarboxylase beta chain</fullName>
        </recommendedName>
    </component>
</protein>